<accession>A0A8X8M505</accession>
<accession>A0A075D5I5</accession>
<name>PENMT_CATRO</name>
<reference key="1">
    <citation type="journal article" date="2016" name="Plant Physiol.">
        <title>A picrinine N-methyltransferase belongs to a new family of gamma-tocopherol-like methyltransferases found in medicinal plants that make biologically active monoterpenoid indole alkaloids.</title>
        <authorList>
            <person name="Levac D."/>
            <person name="Cazares P."/>
            <person name="Yu F."/>
            <person name="De Luca V."/>
        </authorList>
    </citation>
    <scope>NUCLEOTIDE SEQUENCE [MRNA]</scope>
    <source>
        <tissue>Leaf</tissue>
    </source>
</reference>
<reference key="2">
    <citation type="journal article" date="2022" name="Plant Cell Physiol.">
        <title>Tonoplast and peroxisome targeting of gamma-tocopherol N-methyltransferase homologs involved in the synthesis of monoterpene indole alkaloids.</title>
        <authorList>
            <person name="Koudounas K."/>
            <person name="Guirimand G."/>
            <person name="Hoyos L.F.R."/>
            <person name="Carqueijeiro I."/>
            <person name="Cruz P.L."/>
            <person name="Stander E."/>
            <person name="Kulagina N."/>
            <person name="Perrin J."/>
            <person name="Oudin A."/>
            <person name="Besseau S."/>
            <person name="Lanoue A."/>
            <person name="Atehortua L."/>
            <person name="St-Pierre B."/>
            <person name="Giglioli-Guivarc'h N."/>
            <person name="Papon N."/>
            <person name="O'Connor S.E."/>
            <person name="Courdavault V."/>
        </authorList>
    </citation>
    <scope>NUCLEOTIDE SEQUENCE [MRNA]</scope>
    <scope>FUNCTION</scope>
    <scope>SUBCELLULAR LOCATION</scope>
    <scope>GENE FAMILY</scope>
</reference>
<reference key="3">
    <citation type="journal article" date="2022" name="Phytochemistry">
        <title>Molecular and biochemical characterization of Catharanthus roseus perivine-Nbeta-methyltransferase.</title>
        <authorList>
            <person name="Levac D."/>
            <person name="Flores P.C."/>
            <person name="De Luca V."/>
        </authorList>
    </citation>
    <scope>FUNCTION</scope>
    <scope>CATALYTIC ACTIVITY</scope>
    <scope>PATHWAY</scope>
    <scope>BIOPHYSICOCHEMICAL PROPERTIES</scope>
    <scope>TISSUE SPECIFICITY</scope>
</reference>
<gene>
    <name evidence="8" type="primary">PeNMT</name>
    <name evidence="6" type="synonym">Cr706</name>
    <name evidence="6" type="synonym">PiNMT</name>
    <name evidence="7" type="synonym">TMT1</name>
</gene>
<organism>
    <name type="scientific">Catharanthus roseus</name>
    <name type="common">Madagascar periwinkle</name>
    <name type="synonym">Vinca rosea</name>
    <dbReference type="NCBI Taxonomy" id="4058"/>
    <lineage>
        <taxon>Eukaryota</taxon>
        <taxon>Viridiplantae</taxon>
        <taxon>Streptophyta</taxon>
        <taxon>Embryophyta</taxon>
        <taxon>Tracheophyta</taxon>
        <taxon>Spermatophyta</taxon>
        <taxon>Magnoliopsida</taxon>
        <taxon>eudicotyledons</taxon>
        <taxon>Gunneridae</taxon>
        <taxon>Pentapetalae</taxon>
        <taxon>asterids</taxon>
        <taxon>lamiids</taxon>
        <taxon>Gentianales</taxon>
        <taxon>Apocynaceae</taxon>
        <taxon>Rauvolfioideae</taxon>
        <taxon>Vinceae</taxon>
        <taxon>Catharanthinae</taxon>
        <taxon>Catharanthus</taxon>
    </lineage>
</organism>
<dbReference type="EC" id="2.1.1.-" evidence="5"/>
<dbReference type="EMBL" id="KC708453">
    <property type="protein sequence ID" value="AHH02785.1"/>
    <property type="molecule type" value="mRNA"/>
</dbReference>
<dbReference type="EMBL" id="MZ367707">
    <property type="protein sequence ID" value="URY10631.1"/>
    <property type="molecule type" value="mRNA"/>
</dbReference>
<dbReference type="SMR" id="A0A8X8M505"/>
<dbReference type="UniPathway" id="UPA00365"/>
<dbReference type="GO" id="GO:0009705">
    <property type="term" value="C:plant-type vacuole membrane"/>
    <property type="evidence" value="ECO:0000314"/>
    <property type="project" value="UniProtKB"/>
</dbReference>
<dbReference type="GO" id="GO:0008168">
    <property type="term" value="F:methyltransferase activity"/>
    <property type="evidence" value="ECO:0007669"/>
    <property type="project" value="UniProtKB-KW"/>
</dbReference>
<dbReference type="GO" id="GO:0009820">
    <property type="term" value="P:alkaloid metabolic process"/>
    <property type="evidence" value="ECO:0007669"/>
    <property type="project" value="UniProtKB-KW"/>
</dbReference>
<dbReference type="GO" id="GO:0032259">
    <property type="term" value="P:methylation"/>
    <property type="evidence" value="ECO:0007669"/>
    <property type="project" value="UniProtKB-KW"/>
</dbReference>
<dbReference type="CDD" id="cd02440">
    <property type="entry name" value="AdoMet_MTases"/>
    <property type="match status" value="1"/>
</dbReference>
<dbReference type="Gene3D" id="3.40.50.150">
    <property type="entry name" value="Vaccinia Virus protein VP39"/>
    <property type="match status" value="1"/>
</dbReference>
<dbReference type="InterPro" id="IPR050447">
    <property type="entry name" value="Erg6_SMT_methyltransf"/>
</dbReference>
<dbReference type="InterPro" id="IPR025714">
    <property type="entry name" value="Methyltranfer_dom"/>
</dbReference>
<dbReference type="InterPro" id="IPR025774">
    <property type="entry name" value="MTs_g-TMT"/>
</dbReference>
<dbReference type="InterPro" id="IPR029063">
    <property type="entry name" value="SAM-dependent_MTases_sf"/>
</dbReference>
<dbReference type="PANTHER" id="PTHR44068:SF11">
    <property type="entry name" value="GERANYL DIPHOSPHATE 2-C-METHYLTRANSFERASE"/>
    <property type="match status" value="1"/>
</dbReference>
<dbReference type="PANTHER" id="PTHR44068">
    <property type="entry name" value="ZGC:194242"/>
    <property type="match status" value="1"/>
</dbReference>
<dbReference type="Pfam" id="PF13847">
    <property type="entry name" value="Methyltransf_31"/>
    <property type="match status" value="1"/>
</dbReference>
<dbReference type="SUPFAM" id="SSF53335">
    <property type="entry name" value="S-adenosyl-L-methionine-dependent methyltransferases"/>
    <property type="match status" value="1"/>
</dbReference>
<feature type="chain" id="PRO_0000458247" description="Perivine-Nbeta-methyltransferase">
    <location>
        <begin position="1"/>
        <end position="295"/>
    </location>
</feature>
<feature type="region of interest" description="SAM motif I" evidence="3">
    <location>
        <begin position="76"/>
        <end position="85"/>
    </location>
</feature>
<feature type="region of interest" description="SAM motif II" evidence="3">
    <location>
        <begin position="139"/>
        <end position="147"/>
    </location>
</feature>
<feature type="region of interest" description="SAM motif III" evidence="3">
    <location>
        <begin position="166"/>
        <end position="175"/>
    </location>
</feature>
<feature type="short sequence motif" description="Vacuolar targeting signal" evidence="2">
    <location>
        <begin position="138"/>
        <end position="144"/>
    </location>
</feature>
<feature type="sequence conflict" description="In Ref. 1; AHH02785." evidence="9" ref="1">
    <location>
        <begin position="1"/>
        <end position="3"/>
    </location>
</feature>
<feature type="sequence conflict" description="In Ref. 1; AHH02785." evidence="9" ref="1">
    <original>V</original>
    <variation>A</variation>
    <location>
        <position position="49"/>
    </location>
</feature>
<feature type="sequence conflict" description="In Ref. 1; AHH02785." evidence="9" ref="1">
    <original>I</original>
    <variation>M</variation>
    <location>
        <position position="76"/>
    </location>
</feature>
<feature type="sequence conflict" description="In Ref. 1; AHH02785." evidence="9" ref="1">
    <original>M</original>
    <variation>I</variation>
    <location>
        <position position="90"/>
    </location>
</feature>
<evidence type="ECO:0000250" key="1">
    <source>
        <dbReference type="UniProtKB" id="W5U2K2"/>
    </source>
</evidence>
<evidence type="ECO:0000255" key="2"/>
<evidence type="ECO:0000255" key="3">
    <source>
        <dbReference type="PROSITE-ProRule" id="PRU00914"/>
    </source>
</evidence>
<evidence type="ECO:0000269" key="4">
    <source>
    </source>
</evidence>
<evidence type="ECO:0000269" key="5">
    <source>
    </source>
</evidence>
<evidence type="ECO:0000303" key="6">
    <source>
    </source>
</evidence>
<evidence type="ECO:0000303" key="7">
    <source>
    </source>
</evidence>
<evidence type="ECO:0000303" key="8">
    <source>
    </source>
</evidence>
<evidence type="ECO:0000305" key="9"/>
<comment type="function">
    <text evidence="4 5">S-adenosyl-L-methionine-dependent N-methyltransferase involved in the biosynthesis of biologically active monoterpenoid indole alkaloids (MIAs) natural products including vindoline (PubMed:35671807). Catalyzes the conversion of perivine to Nbeta-methylperivine (vobasine) by methylating its N4 nitrogen (PubMed:35671807). Inactive with picrinine as substrate (PubMed:35166361).</text>
</comment>
<comment type="catalytic activity">
    <reaction evidence="5">
        <text>perivine + S-adenosyl-L-methionine = vobasine + S-adenosyl-L-homocysteine + 2 H(+)</text>
        <dbReference type="Rhea" id="RHEA:76147"/>
        <dbReference type="ChEBI" id="CHEBI:10015"/>
        <dbReference type="ChEBI" id="CHEBI:15378"/>
        <dbReference type="ChEBI" id="CHEBI:57856"/>
        <dbReference type="ChEBI" id="CHEBI:59789"/>
        <dbReference type="ChEBI" id="CHEBI:194556"/>
    </reaction>
    <physiologicalReaction direction="left-to-right" evidence="5">
        <dbReference type="Rhea" id="RHEA:76148"/>
    </physiologicalReaction>
</comment>
<comment type="biophysicochemical properties">
    <kinetics>
        <KM evidence="5">29.5 uM for perivine</KM>
        <KM evidence="5">3.5 uM for S-adenosyl-L-methionine</KM>
    </kinetics>
    <phDependence>
        <text evidence="5">Optimum pH is 7.5.</text>
    </phDependence>
    <temperatureDependence>
        <text evidence="5">Optimum temperature is 30 degrees Celsius.</text>
    </temperatureDependence>
</comment>
<comment type="pathway">
    <text evidence="5">Alkaloid biosynthesis; vindoline biosynthesis.</text>
</comment>
<comment type="subunit">
    <text evidence="1">Homodimer.</text>
</comment>
<comment type="subcellular location">
    <subcellularLocation>
        <location evidence="4">Vacuole membrane</location>
    </subcellularLocation>
</comment>
<comment type="tissue specificity">
    <text evidence="5">Mainly expressed in young leaves, and, to a lower extent, in mature leaves, flowers, stems and roots (at protein level) (PubMed:35671807). Transcripts levels are highest in flowers, moderate in leaves and low in roots and stems (PubMed:35671807).</text>
</comment>
<comment type="similarity">
    <text evidence="3">Belongs to the class I-like SAM-binding methyltransferase superfamily. gTMT family.</text>
</comment>
<keyword id="KW-0017">Alkaloid metabolism</keyword>
<keyword id="KW-0472">Membrane</keyword>
<keyword id="KW-0489">Methyltransferase</keyword>
<keyword id="KW-0949">S-adenosyl-L-methionine</keyword>
<keyword id="KW-0808">Transferase</keyword>
<keyword id="KW-0926">Vacuole</keyword>
<proteinExistence type="evidence at protein level"/>
<protein>
    <recommendedName>
        <fullName evidence="8">Perivine-Nbeta-methyltransferase</fullName>
        <shortName evidence="8">CrPeNMT</shortName>
        <ecNumber evidence="5">2.1.1.-</ecNumber>
    </recommendedName>
    <alternativeName>
        <fullName evidence="7">Gamma-tocopherol-like methyltransferase 1</fullName>
        <shortName evidence="7">CrTMT1</shortName>
    </alternativeName>
    <alternativeName>
        <fullName evidence="6">Picrinine-N-methytransferase homolog TMT1</fullName>
        <shortName evidence="6">CrPiNMT</shortName>
    </alternativeName>
</protein>
<sequence length="295" mass="32778">MASMGEKEAVAELYDKVTSNGILEELFGEHLHDGYYEVGTVATISAHRVAVVRIIDEALRFADVFTDDQAKKPRNILDVGCGKGGTCVHMARKYDIQCTGISISPDEIQCAKHLAASQGLENKVSFDVGDALNMRYSDGSFELIFVIQCIEHIQDKEKFIREIVRVAAPGAQIVIISTACRNLSPSEKSLKPKEEKTLKKICNYLHLSGFCSLSDYSNWLTPLPIEDMKIADWTQNAAPFYTLLLREAFSIKGFISLLMNGGWTAVKVILGMKTIHEAIENDLLKIVAVTFRKTK</sequence>